<proteinExistence type="inferred from homology"/>
<keyword id="KW-1185">Reference proteome</keyword>
<keyword id="KW-0687">Ribonucleoprotein</keyword>
<keyword id="KW-0689">Ribosomal protein</keyword>
<keyword id="KW-0694">RNA-binding</keyword>
<keyword id="KW-0699">rRNA-binding</keyword>
<organism>
    <name type="scientific">Limosilactobacillus reuteri (strain DSM 20016)</name>
    <name type="common">Lactobacillus reuteri</name>
    <dbReference type="NCBI Taxonomy" id="557436"/>
    <lineage>
        <taxon>Bacteria</taxon>
        <taxon>Bacillati</taxon>
        <taxon>Bacillota</taxon>
        <taxon>Bacilli</taxon>
        <taxon>Lactobacillales</taxon>
        <taxon>Lactobacillaceae</taxon>
        <taxon>Limosilactobacillus</taxon>
    </lineage>
</organism>
<sequence length="78" mass="9154">MAQQRRGGRRRRKVDFIAANHIEYIDYKDTDLLRRFISERGKILPRRVTGTSAKNQRKLTIAIKRARIMGLLPFVAED</sequence>
<feature type="chain" id="PRO_1000059140" description="Small ribosomal subunit protein bS18">
    <location>
        <begin position="1"/>
        <end position="78"/>
    </location>
</feature>
<comment type="function">
    <text evidence="1">Binds as a heterodimer with protein bS6 to the central domain of the 16S rRNA, where it helps stabilize the platform of the 30S subunit.</text>
</comment>
<comment type="subunit">
    <text evidence="1">Part of the 30S ribosomal subunit. Forms a tight heterodimer with protein bS6.</text>
</comment>
<comment type="similarity">
    <text evidence="1">Belongs to the bacterial ribosomal protein bS18 family.</text>
</comment>
<dbReference type="EMBL" id="CP000705">
    <property type="protein sequence ID" value="ABQ82285.1"/>
    <property type="molecule type" value="Genomic_DNA"/>
</dbReference>
<dbReference type="RefSeq" id="WP_003665240.1">
    <property type="nucleotide sequence ID" value="NZ_AZDD01000016.1"/>
</dbReference>
<dbReference type="SMR" id="A5VHG1"/>
<dbReference type="STRING" id="557436.Lreu_0009"/>
<dbReference type="GeneID" id="78174668"/>
<dbReference type="KEGG" id="lre:Lreu_0009"/>
<dbReference type="PATRIC" id="fig|557436.17.peg.518"/>
<dbReference type="eggNOG" id="COG0238">
    <property type="taxonomic scope" value="Bacteria"/>
</dbReference>
<dbReference type="HOGENOM" id="CLU_148710_2_2_9"/>
<dbReference type="Proteomes" id="UP000001991">
    <property type="component" value="Chromosome"/>
</dbReference>
<dbReference type="GO" id="GO:0022627">
    <property type="term" value="C:cytosolic small ribosomal subunit"/>
    <property type="evidence" value="ECO:0007669"/>
    <property type="project" value="TreeGrafter"/>
</dbReference>
<dbReference type="GO" id="GO:0070181">
    <property type="term" value="F:small ribosomal subunit rRNA binding"/>
    <property type="evidence" value="ECO:0007669"/>
    <property type="project" value="TreeGrafter"/>
</dbReference>
<dbReference type="GO" id="GO:0003735">
    <property type="term" value="F:structural constituent of ribosome"/>
    <property type="evidence" value="ECO:0007669"/>
    <property type="project" value="InterPro"/>
</dbReference>
<dbReference type="GO" id="GO:0006412">
    <property type="term" value="P:translation"/>
    <property type="evidence" value="ECO:0007669"/>
    <property type="project" value="UniProtKB-UniRule"/>
</dbReference>
<dbReference type="FunFam" id="4.10.640.10:FF:000003">
    <property type="entry name" value="30S ribosomal protein S18"/>
    <property type="match status" value="1"/>
</dbReference>
<dbReference type="Gene3D" id="4.10.640.10">
    <property type="entry name" value="Ribosomal protein S18"/>
    <property type="match status" value="1"/>
</dbReference>
<dbReference type="HAMAP" id="MF_00270">
    <property type="entry name" value="Ribosomal_bS18"/>
    <property type="match status" value="1"/>
</dbReference>
<dbReference type="InterPro" id="IPR001648">
    <property type="entry name" value="Ribosomal_bS18"/>
</dbReference>
<dbReference type="InterPro" id="IPR018275">
    <property type="entry name" value="Ribosomal_bS18_CS"/>
</dbReference>
<dbReference type="InterPro" id="IPR036870">
    <property type="entry name" value="Ribosomal_bS18_sf"/>
</dbReference>
<dbReference type="NCBIfam" id="TIGR00165">
    <property type="entry name" value="S18"/>
    <property type="match status" value="1"/>
</dbReference>
<dbReference type="PANTHER" id="PTHR13479">
    <property type="entry name" value="30S RIBOSOMAL PROTEIN S18"/>
    <property type="match status" value="1"/>
</dbReference>
<dbReference type="PANTHER" id="PTHR13479:SF40">
    <property type="entry name" value="SMALL RIBOSOMAL SUBUNIT PROTEIN BS18M"/>
    <property type="match status" value="1"/>
</dbReference>
<dbReference type="Pfam" id="PF01084">
    <property type="entry name" value="Ribosomal_S18"/>
    <property type="match status" value="1"/>
</dbReference>
<dbReference type="PRINTS" id="PR00974">
    <property type="entry name" value="RIBOSOMALS18"/>
</dbReference>
<dbReference type="SUPFAM" id="SSF46911">
    <property type="entry name" value="Ribosomal protein S18"/>
    <property type="match status" value="1"/>
</dbReference>
<dbReference type="PROSITE" id="PS00057">
    <property type="entry name" value="RIBOSOMAL_S18"/>
    <property type="match status" value="1"/>
</dbReference>
<accession>A5VHG1</accession>
<gene>
    <name evidence="1" type="primary">rpsR</name>
    <name type="ordered locus">Lreu_0009</name>
</gene>
<evidence type="ECO:0000255" key="1">
    <source>
        <dbReference type="HAMAP-Rule" id="MF_00270"/>
    </source>
</evidence>
<evidence type="ECO:0000305" key="2"/>
<reference key="1">
    <citation type="journal article" date="2011" name="PLoS Genet.">
        <title>The evolution of host specialization in the vertebrate gut symbiont Lactobacillus reuteri.</title>
        <authorList>
            <person name="Frese S.A."/>
            <person name="Benson A.K."/>
            <person name="Tannock G.W."/>
            <person name="Loach D.M."/>
            <person name="Kim J."/>
            <person name="Zhang M."/>
            <person name="Oh P.L."/>
            <person name="Heng N.C."/>
            <person name="Patil P.B."/>
            <person name="Juge N."/>
            <person name="Mackenzie D.A."/>
            <person name="Pearson B.M."/>
            <person name="Lapidus A."/>
            <person name="Dalin E."/>
            <person name="Tice H."/>
            <person name="Goltsman E."/>
            <person name="Land M."/>
            <person name="Hauser L."/>
            <person name="Ivanova N."/>
            <person name="Kyrpides N.C."/>
            <person name="Walter J."/>
        </authorList>
    </citation>
    <scope>NUCLEOTIDE SEQUENCE [LARGE SCALE GENOMIC DNA]</scope>
    <source>
        <strain>DSM 20016</strain>
    </source>
</reference>
<name>RS18_LIMRD</name>
<protein>
    <recommendedName>
        <fullName evidence="1">Small ribosomal subunit protein bS18</fullName>
    </recommendedName>
    <alternativeName>
        <fullName evidence="2">30S ribosomal protein S18</fullName>
    </alternativeName>
</protein>